<protein>
    <recommendedName>
        <fullName evidence="1">tRNA-2-methylthio-N(6)-dimethylallyladenosine synthase</fullName>
        <ecNumber evidence="1">2.8.4.3</ecNumber>
    </recommendedName>
    <alternativeName>
        <fullName evidence="1">(Dimethylallyl)adenosine tRNA methylthiotransferase MiaB</fullName>
    </alternativeName>
    <alternativeName>
        <fullName evidence="1">tRNA-i(6)A37 methylthiotransferase</fullName>
    </alternativeName>
</protein>
<accession>A2SD55</accession>
<feature type="chain" id="PRO_0000374374" description="tRNA-2-methylthio-N(6)-dimethylallyladenosine synthase">
    <location>
        <begin position="1"/>
        <end position="457"/>
    </location>
</feature>
<feature type="domain" description="MTTase N-terminal" evidence="1">
    <location>
        <begin position="8"/>
        <end position="123"/>
    </location>
</feature>
<feature type="domain" description="Radical SAM core" evidence="2">
    <location>
        <begin position="146"/>
        <end position="379"/>
    </location>
</feature>
<feature type="domain" description="TRAM" evidence="1">
    <location>
        <begin position="382"/>
        <end position="449"/>
    </location>
</feature>
<feature type="binding site" evidence="1">
    <location>
        <position position="17"/>
    </location>
    <ligand>
        <name>[4Fe-4S] cluster</name>
        <dbReference type="ChEBI" id="CHEBI:49883"/>
        <label>1</label>
    </ligand>
</feature>
<feature type="binding site" evidence="1">
    <location>
        <position position="54"/>
    </location>
    <ligand>
        <name>[4Fe-4S] cluster</name>
        <dbReference type="ChEBI" id="CHEBI:49883"/>
        <label>1</label>
    </ligand>
</feature>
<feature type="binding site" evidence="1">
    <location>
        <position position="86"/>
    </location>
    <ligand>
        <name>[4Fe-4S] cluster</name>
        <dbReference type="ChEBI" id="CHEBI:49883"/>
        <label>1</label>
    </ligand>
</feature>
<feature type="binding site" evidence="1">
    <location>
        <position position="160"/>
    </location>
    <ligand>
        <name>[4Fe-4S] cluster</name>
        <dbReference type="ChEBI" id="CHEBI:49883"/>
        <label>2</label>
        <note>4Fe-4S-S-AdoMet</note>
    </ligand>
</feature>
<feature type="binding site" evidence="1">
    <location>
        <position position="164"/>
    </location>
    <ligand>
        <name>[4Fe-4S] cluster</name>
        <dbReference type="ChEBI" id="CHEBI:49883"/>
        <label>2</label>
        <note>4Fe-4S-S-AdoMet</note>
    </ligand>
</feature>
<feature type="binding site" evidence="1">
    <location>
        <position position="167"/>
    </location>
    <ligand>
        <name>[4Fe-4S] cluster</name>
        <dbReference type="ChEBI" id="CHEBI:49883"/>
        <label>2</label>
        <note>4Fe-4S-S-AdoMet</note>
    </ligand>
</feature>
<dbReference type="EC" id="2.8.4.3" evidence="1"/>
<dbReference type="EMBL" id="CP000555">
    <property type="protein sequence ID" value="ABM93494.1"/>
    <property type="molecule type" value="Genomic_DNA"/>
</dbReference>
<dbReference type="RefSeq" id="WP_011828132.1">
    <property type="nucleotide sequence ID" value="NC_008825.1"/>
</dbReference>
<dbReference type="SMR" id="A2SD55"/>
<dbReference type="STRING" id="420662.Mpe_A0532"/>
<dbReference type="KEGG" id="mpt:Mpe_A0532"/>
<dbReference type="eggNOG" id="COG0621">
    <property type="taxonomic scope" value="Bacteria"/>
</dbReference>
<dbReference type="HOGENOM" id="CLU_018697_2_0_4"/>
<dbReference type="Proteomes" id="UP000000366">
    <property type="component" value="Chromosome"/>
</dbReference>
<dbReference type="GO" id="GO:0005829">
    <property type="term" value="C:cytosol"/>
    <property type="evidence" value="ECO:0007669"/>
    <property type="project" value="TreeGrafter"/>
</dbReference>
<dbReference type="GO" id="GO:0051539">
    <property type="term" value="F:4 iron, 4 sulfur cluster binding"/>
    <property type="evidence" value="ECO:0007669"/>
    <property type="project" value="UniProtKB-UniRule"/>
</dbReference>
<dbReference type="GO" id="GO:0046872">
    <property type="term" value="F:metal ion binding"/>
    <property type="evidence" value="ECO:0007669"/>
    <property type="project" value="UniProtKB-KW"/>
</dbReference>
<dbReference type="GO" id="GO:0035597">
    <property type="term" value="F:N6-isopentenyladenosine methylthiotransferase activity"/>
    <property type="evidence" value="ECO:0007669"/>
    <property type="project" value="TreeGrafter"/>
</dbReference>
<dbReference type="CDD" id="cd01335">
    <property type="entry name" value="Radical_SAM"/>
    <property type="match status" value="1"/>
</dbReference>
<dbReference type="FunFam" id="3.40.50.12160:FF:000001">
    <property type="entry name" value="tRNA-2-methylthio-N(6)-dimethylallyladenosine synthase"/>
    <property type="match status" value="1"/>
</dbReference>
<dbReference type="FunFam" id="3.80.30.20:FF:000001">
    <property type="entry name" value="tRNA-2-methylthio-N(6)-dimethylallyladenosine synthase 2"/>
    <property type="match status" value="1"/>
</dbReference>
<dbReference type="Gene3D" id="3.40.50.12160">
    <property type="entry name" value="Methylthiotransferase, N-terminal domain"/>
    <property type="match status" value="1"/>
</dbReference>
<dbReference type="Gene3D" id="3.80.30.20">
    <property type="entry name" value="tm_1862 like domain"/>
    <property type="match status" value="1"/>
</dbReference>
<dbReference type="HAMAP" id="MF_01864">
    <property type="entry name" value="tRNA_metthiotr_MiaB"/>
    <property type="match status" value="1"/>
</dbReference>
<dbReference type="InterPro" id="IPR006638">
    <property type="entry name" value="Elp3/MiaA/NifB-like_rSAM"/>
</dbReference>
<dbReference type="InterPro" id="IPR005839">
    <property type="entry name" value="Methylthiotransferase"/>
</dbReference>
<dbReference type="InterPro" id="IPR020612">
    <property type="entry name" value="Methylthiotransferase_CS"/>
</dbReference>
<dbReference type="InterPro" id="IPR013848">
    <property type="entry name" value="Methylthiotransferase_N"/>
</dbReference>
<dbReference type="InterPro" id="IPR038135">
    <property type="entry name" value="Methylthiotransferase_N_sf"/>
</dbReference>
<dbReference type="InterPro" id="IPR006463">
    <property type="entry name" value="MiaB_methiolase"/>
</dbReference>
<dbReference type="InterPro" id="IPR007197">
    <property type="entry name" value="rSAM"/>
</dbReference>
<dbReference type="InterPro" id="IPR023404">
    <property type="entry name" value="rSAM_horseshoe"/>
</dbReference>
<dbReference type="InterPro" id="IPR002792">
    <property type="entry name" value="TRAM_dom"/>
</dbReference>
<dbReference type="NCBIfam" id="TIGR01574">
    <property type="entry name" value="miaB-methiolase"/>
    <property type="match status" value="1"/>
</dbReference>
<dbReference type="NCBIfam" id="TIGR00089">
    <property type="entry name" value="MiaB/RimO family radical SAM methylthiotransferase"/>
    <property type="match status" value="1"/>
</dbReference>
<dbReference type="PANTHER" id="PTHR43020">
    <property type="entry name" value="CDK5 REGULATORY SUBUNIT-ASSOCIATED PROTEIN 1"/>
    <property type="match status" value="1"/>
</dbReference>
<dbReference type="PANTHER" id="PTHR43020:SF2">
    <property type="entry name" value="MITOCHONDRIAL TRNA METHYLTHIOTRANSFERASE CDK5RAP1"/>
    <property type="match status" value="1"/>
</dbReference>
<dbReference type="Pfam" id="PF04055">
    <property type="entry name" value="Radical_SAM"/>
    <property type="match status" value="1"/>
</dbReference>
<dbReference type="Pfam" id="PF01938">
    <property type="entry name" value="TRAM"/>
    <property type="match status" value="1"/>
</dbReference>
<dbReference type="Pfam" id="PF00919">
    <property type="entry name" value="UPF0004"/>
    <property type="match status" value="1"/>
</dbReference>
<dbReference type="SFLD" id="SFLDF00273">
    <property type="entry name" value="(dimethylallyl)adenosine_tRNA"/>
    <property type="match status" value="1"/>
</dbReference>
<dbReference type="SFLD" id="SFLDG01082">
    <property type="entry name" value="B12-binding_domain_containing"/>
    <property type="match status" value="1"/>
</dbReference>
<dbReference type="SFLD" id="SFLDG01061">
    <property type="entry name" value="methylthiotransferase"/>
    <property type="match status" value="1"/>
</dbReference>
<dbReference type="SMART" id="SM00729">
    <property type="entry name" value="Elp3"/>
    <property type="match status" value="1"/>
</dbReference>
<dbReference type="SUPFAM" id="SSF102114">
    <property type="entry name" value="Radical SAM enzymes"/>
    <property type="match status" value="1"/>
</dbReference>
<dbReference type="PROSITE" id="PS51449">
    <property type="entry name" value="MTTASE_N"/>
    <property type="match status" value="1"/>
</dbReference>
<dbReference type="PROSITE" id="PS01278">
    <property type="entry name" value="MTTASE_RADICAL"/>
    <property type="match status" value="1"/>
</dbReference>
<dbReference type="PROSITE" id="PS51918">
    <property type="entry name" value="RADICAL_SAM"/>
    <property type="match status" value="1"/>
</dbReference>
<dbReference type="PROSITE" id="PS50926">
    <property type="entry name" value="TRAM"/>
    <property type="match status" value="1"/>
</dbReference>
<proteinExistence type="inferred from homology"/>
<name>MIAB_METPP</name>
<reference key="1">
    <citation type="journal article" date="2007" name="J. Bacteriol.">
        <title>Whole-genome analysis of the methyl tert-butyl ether-degrading beta-proteobacterium Methylibium petroleiphilum PM1.</title>
        <authorList>
            <person name="Kane S.R."/>
            <person name="Chakicherla A.Y."/>
            <person name="Chain P.S.G."/>
            <person name="Schmidt R."/>
            <person name="Shin M.W."/>
            <person name="Legler T.C."/>
            <person name="Scow K.M."/>
            <person name="Larimer F.W."/>
            <person name="Lucas S.M."/>
            <person name="Richardson P.M."/>
            <person name="Hristova K.R."/>
        </authorList>
    </citation>
    <scope>NUCLEOTIDE SEQUENCE [LARGE SCALE GENOMIC DNA]</scope>
    <source>
        <strain>ATCC BAA-1232 / LMG 22953 / PM1</strain>
    </source>
</reference>
<keyword id="KW-0004">4Fe-4S</keyword>
<keyword id="KW-0963">Cytoplasm</keyword>
<keyword id="KW-0408">Iron</keyword>
<keyword id="KW-0411">Iron-sulfur</keyword>
<keyword id="KW-0479">Metal-binding</keyword>
<keyword id="KW-1185">Reference proteome</keyword>
<keyword id="KW-0949">S-adenosyl-L-methionine</keyword>
<keyword id="KW-0808">Transferase</keyword>
<keyword id="KW-0819">tRNA processing</keyword>
<gene>
    <name evidence="1" type="primary">miaB</name>
    <name type="ordered locus">Mpe_A0532</name>
</gene>
<sequence length="457" mass="50623">MSAAGTGKKVFIKTFGCQMNEYDSDKMADVLRAAEGYEPTTDVEQADLILFNTCSVREKAQEKVFSDLGRVKHLKARGVKIGVGGCVASQEGAALIERAPYVDVVFGPQTLHRLPEMLARRDAQQRPQVDISFPEIEKFDHLPPARVDGATAFVSIMEGCSKYCSYCVVPYTRGEEVSRPFDDVLTEVASLADQGVKEVTLLGQNVNGYRGRMGDTAEIADFALLLEYVAEIPGIARIRYTTSHPNEFSQRLIDVYARVPQLVNHLHLPVQHGSDRILSAMKRGYTSLEYKSSIRKLRAIRPDISLSTDFIVGFPGETDDDHARTMKLIEDVGFDHSFSFIYSARPGTPAAALHDDAPRELKLARLQQVQEAIEANGRRIGQSRVGTVQRILVEGPSRRPELNAGHELMGRTECNRIVNFAGPARLTGQLIDVTITEAYPHSLRGEVLLRERSPQPA</sequence>
<organism>
    <name type="scientific">Methylibium petroleiphilum (strain ATCC BAA-1232 / LMG 22953 / PM1)</name>
    <dbReference type="NCBI Taxonomy" id="420662"/>
    <lineage>
        <taxon>Bacteria</taxon>
        <taxon>Pseudomonadati</taxon>
        <taxon>Pseudomonadota</taxon>
        <taxon>Betaproteobacteria</taxon>
        <taxon>Burkholderiales</taxon>
        <taxon>Sphaerotilaceae</taxon>
        <taxon>Methylibium</taxon>
    </lineage>
</organism>
<comment type="function">
    <text evidence="1">Catalyzes the methylthiolation of N6-(dimethylallyl)adenosine (i(6)A), leading to the formation of 2-methylthio-N6-(dimethylallyl)adenosine (ms(2)i(6)A) at position 37 in tRNAs that read codons beginning with uridine.</text>
</comment>
<comment type="catalytic activity">
    <reaction evidence="1">
        <text>N(6)-dimethylallyladenosine(37) in tRNA + (sulfur carrier)-SH + AH2 + 2 S-adenosyl-L-methionine = 2-methylsulfanyl-N(6)-dimethylallyladenosine(37) in tRNA + (sulfur carrier)-H + 5'-deoxyadenosine + L-methionine + A + S-adenosyl-L-homocysteine + 2 H(+)</text>
        <dbReference type="Rhea" id="RHEA:37067"/>
        <dbReference type="Rhea" id="RHEA-COMP:10375"/>
        <dbReference type="Rhea" id="RHEA-COMP:10376"/>
        <dbReference type="Rhea" id="RHEA-COMP:14737"/>
        <dbReference type="Rhea" id="RHEA-COMP:14739"/>
        <dbReference type="ChEBI" id="CHEBI:13193"/>
        <dbReference type="ChEBI" id="CHEBI:15378"/>
        <dbReference type="ChEBI" id="CHEBI:17319"/>
        <dbReference type="ChEBI" id="CHEBI:17499"/>
        <dbReference type="ChEBI" id="CHEBI:29917"/>
        <dbReference type="ChEBI" id="CHEBI:57844"/>
        <dbReference type="ChEBI" id="CHEBI:57856"/>
        <dbReference type="ChEBI" id="CHEBI:59789"/>
        <dbReference type="ChEBI" id="CHEBI:64428"/>
        <dbReference type="ChEBI" id="CHEBI:74415"/>
        <dbReference type="ChEBI" id="CHEBI:74417"/>
        <dbReference type="EC" id="2.8.4.3"/>
    </reaction>
</comment>
<comment type="cofactor">
    <cofactor evidence="1">
        <name>[4Fe-4S] cluster</name>
        <dbReference type="ChEBI" id="CHEBI:49883"/>
    </cofactor>
    <text evidence="1">Binds 2 [4Fe-4S] clusters. One cluster is coordinated with 3 cysteines and an exchangeable S-adenosyl-L-methionine.</text>
</comment>
<comment type="subunit">
    <text evidence="1">Monomer.</text>
</comment>
<comment type="subcellular location">
    <subcellularLocation>
        <location evidence="1">Cytoplasm</location>
    </subcellularLocation>
</comment>
<comment type="similarity">
    <text evidence="1">Belongs to the methylthiotransferase family. MiaB subfamily.</text>
</comment>
<evidence type="ECO:0000255" key="1">
    <source>
        <dbReference type="HAMAP-Rule" id="MF_01864"/>
    </source>
</evidence>
<evidence type="ECO:0000255" key="2">
    <source>
        <dbReference type="PROSITE-ProRule" id="PRU01266"/>
    </source>
</evidence>